<sequence>MRGVKIPELSKIMRELKTKELKKLLRYELDESTSVDSDEEQDDPGVPFYYEELEKCKTMKELYKFAREYDLQIPRIDKNDIFLKACKELNKNNIFDPNEDIIFEGVIIDPVVIG</sequence>
<organism>
    <name type="scientific">Sputnik virophage</name>
    <dbReference type="NCBI Taxonomy" id="543939"/>
    <lineage>
        <taxon>Viruses</taxon>
        <taxon>Varidnaviria</taxon>
        <taxon>Bamfordvirae</taxon>
        <taxon>Preplasmiviricota</taxon>
        <taxon>Maveriviricetes</taxon>
        <taxon>Priklausovirales</taxon>
        <taxon>Lavidaviridae</taxon>
        <taxon>Sputnikvirus</taxon>
        <taxon>Mimivirus-dependent virus Sputnik</taxon>
    </lineage>
</organism>
<protein>
    <recommendedName>
        <fullName>Uncharacterized protein V2</fullName>
    </recommendedName>
</protein>
<name>V2_SPTNK</name>
<organismHost>
    <name type="scientific">Acanthamoeba polyphaga</name>
    <name type="common">Amoeba</name>
    <dbReference type="NCBI Taxonomy" id="5757"/>
</organismHost>
<reference key="1">
    <citation type="journal article" date="2008" name="Nature">
        <title>The virophage as a unique parasite of the giant mimivirus.</title>
        <authorList>
            <person name="La Scola B."/>
            <person name="Desnues C."/>
            <person name="Pagnier I."/>
            <person name="Robert C."/>
            <person name="Barrassi L."/>
            <person name="Fournous G."/>
            <person name="Merchat M."/>
            <person name="Suzan-Monti M."/>
            <person name="Forterre P."/>
            <person name="Koonin E."/>
            <person name="Raoult D."/>
        </authorList>
    </citation>
    <scope>NUCLEOTIDE SEQUENCE [GENOMIC DNA]</scope>
</reference>
<keyword id="KW-1185">Reference proteome</keyword>
<dbReference type="EMBL" id="EU606015">
    <property type="protein sequence ID" value="ACF16986.1"/>
    <property type="molecule type" value="Genomic_DNA"/>
</dbReference>
<dbReference type="RefSeq" id="YP_002122363.1">
    <property type="nucleotide sequence ID" value="NC_011132.1"/>
</dbReference>
<dbReference type="KEGG" id="vg:6760350"/>
<dbReference type="Proteomes" id="UP000001863">
    <property type="component" value="Segment"/>
</dbReference>
<proteinExistence type="predicted"/>
<feature type="chain" id="PRO_0000369810" description="Uncharacterized protein V2">
    <location>
        <begin position="1"/>
        <end position="114"/>
    </location>
</feature>
<accession>B4YNE2</accession>
<gene>
    <name type="ORF">ORF2</name>
</gene>